<sequence>MEKSHFFAHLARMNLIQRWPLMRSVSTENISEHSLQVAFVAHALALIKNKKFDGNTNPERIALLGMFHDTSEVLTGDMPTPIKYYNPAIAEEYKKIELAAEQKLLSMLPEEFQEDYAPLLDSHCINKDDYVIVKQADSLCAYLKCLEELNAGNHEFAQAKKRLEKTLQTRSTPEMEYFLNTFVESFNLTLDEIS</sequence>
<organism>
    <name type="scientific">Photobacterium profundum (strain SS9)</name>
    <dbReference type="NCBI Taxonomy" id="298386"/>
    <lineage>
        <taxon>Bacteria</taxon>
        <taxon>Pseudomonadati</taxon>
        <taxon>Pseudomonadota</taxon>
        <taxon>Gammaproteobacteria</taxon>
        <taxon>Vibrionales</taxon>
        <taxon>Vibrionaceae</taxon>
        <taxon>Photobacterium</taxon>
    </lineage>
</organism>
<accession>Q6LNX0</accession>
<keyword id="KW-0963">Cytoplasm</keyword>
<keyword id="KW-0378">Hydrolase</keyword>
<keyword id="KW-0479">Metal-binding</keyword>
<keyword id="KW-0547">Nucleotide-binding</keyword>
<keyword id="KW-1185">Reference proteome</keyword>
<proteinExistence type="inferred from homology"/>
<reference key="1">
    <citation type="journal article" date="2005" name="Science">
        <title>Life at depth: Photobacterium profundum genome sequence and expression analysis.</title>
        <authorList>
            <person name="Vezzi A."/>
            <person name="Campanaro S."/>
            <person name="D'Angelo M."/>
            <person name="Simonato F."/>
            <person name="Vitulo N."/>
            <person name="Lauro F.M."/>
            <person name="Cestaro A."/>
            <person name="Malacrida G."/>
            <person name="Simionati B."/>
            <person name="Cannata N."/>
            <person name="Romualdi C."/>
            <person name="Bartlett D.H."/>
            <person name="Valle G."/>
        </authorList>
    </citation>
    <scope>NUCLEOTIDE SEQUENCE [LARGE SCALE GENOMIC DNA]</scope>
    <source>
        <strain>ATCC BAA-1253 / SS9</strain>
    </source>
</reference>
<name>5DNU_PHOPR</name>
<dbReference type="EC" id="3.1.3.89" evidence="1"/>
<dbReference type="EMBL" id="CR378671">
    <property type="protein sequence ID" value="CAG21006.1"/>
    <property type="molecule type" value="Genomic_DNA"/>
</dbReference>
<dbReference type="SMR" id="Q6LNX0"/>
<dbReference type="STRING" id="298386.PBPRA2627"/>
<dbReference type="KEGG" id="ppr:PBPRA2627"/>
<dbReference type="eggNOG" id="COG1896">
    <property type="taxonomic scope" value="Bacteria"/>
</dbReference>
<dbReference type="HOGENOM" id="CLU_084784_0_0_6"/>
<dbReference type="Proteomes" id="UP000000593">
    <property type="component" value="Chromosome 1"/>
</dbReference>
<dbReference type="GO" id="GO:0005737">
    <property type="term" value="C:cytoplasm"/>
    <property type="evidence" value="ECO:0007669"/>
    <property type="project" value="UniProtKB-SubCell"/>
</dbReference>
<dbReference type="GO" id="GO:0002953">
    <property type="term" value="F:5'-deoxynucleotidase activity"/>
    <property type="evidence" value="ECO:0007669"/>
    <property type="project" value="UniProtKB-EC"/>
</dbReference>
<dbReference type="GO" id="GO:0046872">
    <property type="term" value="F:metal ion binding"/>
    <property type="evidence" value="ECO:0007669"/>
    <property type="project" value="UniProtKB-KW"/>
</dbReference>
<dbReference type="GO" id="GO:0000166">
    <property type="term" value="F:nucleotide binding"/>
    <property type="evidence" value="ECO:0007669"/>
    <property type="project" value="UniProtKB-KW"/>
</dbReference>
<dbReference type="Gene3D" id="1.10.3210.10">
    <property type="entry name" value="Hypothetical protein af1432"/>
    <property type="match status" value="1"/>
</dbReference>
<dbReference type="HAMAP" id="MF_01100">
    <property type="entry name" value="5DNU"/>
    <property type="match status" value="1"/>
</dbReference>
<dbReference type="InterPro" id="IPR003607">
    <property type="entry name" value="HD/PDEase_dom"/>
</dbReference>
<dbReference type="InterPro" id="IPR006674">
    <property type="entry name" value="HD_domain"/>
</dbReference>
<dbReference type="InterPro" id="IPR022971">
    <property type="entry name" value="YfbR"/>
</dbReference>
<dbReference type="InterPro" id="IPR039356">
    <property type="entry name" value="YfbR/HDDC2"/>
</dbReference>
<dbReference type="NCBIfam" id="NF003009">
    <property type="entry name" value="PRK03826.1"/>
    <property type="match status" value="1"/>
</dbReference>
<dbReference type="PANTHER" id="PTHR11845">
    <property type="entry name" value="5'-DEOXYNUCLEOTIDASE HDDC2"/>
    <property type="match status" value="1"/>
</dbReference>
<dbReference type="PANTHER" id="PTHR11845:SF13">
    <property type="entry name" value="5'-DEOXYNUCLEOTIDASE HDDC2"/>
    <property type="match status" value="1"/>
</dbReference>
<dbReference type="Pfam" id="PF12917">
    <property type="entry name" value="YfbR-like"/>
    <property type="match status" value="1"/>
</dbReference>
<dbReference type="SMART" id="SM00471">
    <property type="entry name" value="HDc"/>
    <property type="match status" value="1"/>
</dbReference>
<dbReference type="SUPFAM" id="SSF109604">
    <property type="entry name" value="HD-domain/PDEase-like"/>
    <property type="match status" value="1"/>
</dbReference>
<dbReference type="PROSITE" id="PS51831">
    <property type="entry name" value="HD"/>
    <property type="match status" value="1"/>
</dbReference>
<protein>
    <recommendedName>
        <fullName evidence="1">5'-deoxynucleotidase PBPRA2627</fullName>
        <ecNumber evidence="1">3.1.3.89</ecNumber>
    </recommendedName>
    <alternativeName>
        <fullName evidence="1">5'-deoxyribonucleotidase</fullName>
    </alternativeName>
    <alternativeName>
        <fullName evidence="1">Nucleoside 5'-monophosphate phosphohydrolase</fullName>
    </alternativeName>
</protein>
<feature type="chain" id="PRO_0000095055" description="5'-deoxynucleotidase PBPRA2627">
    <location>
        <begin position="1"/>
        <end position="194"/>
    </location>
</feature>
<feature type="domain" description="HD" evidence="2">
    <location>
        <begin position="30"/>
        <end position="142"/>
    </location>
</feature>
<feature type="binding site" evidence="1">
    <location>
        <begin position="18"/>
        <end position="19"/>
    </location>
    <ligand>
        <name>substrate</name>
    </ligand>
</feature>
<feature type="binding site" evidence="1">
    <location>
        <position position="33"/>
    </location>
    <ligand>
        <name>a divalent metal cation</name>
        <dbReference type="ChEBI" id="CHEBI:60240"/>
    </ligand>
</feature>
<feature type="binding site" evidence="1">
    <location>
        <position position="33"/>
    </location>
    <ligand>
        <name>substrate</name>
    </ligand>
</feature>
<feature type="binding site" evidence="1">
    <location>
        <position position="68"/>
    </location>
    <ligand>
        <name>a divalent metal cation</name>
        <dbReference type="ChEBI" id="CHEBI:60240"/>
    </ligand>
</feature>
<feature type="binding site" evidence="1">
    <location>
        <position position="69"/>
    </location>
    <ligand>
        <name>a divalent metal cation</name>
        <dbReference type="ChEBI" id="CHEBI:60240"/>
    </ligand>
</feature>
<feature type="binding site" evidence="1">
    <location>
        <position position="69"/>
    </location>
    <ligand>
        <name>substrate</name>
    </ligand>
</feature>
<feature type="binding site" evidence="1">
    <location>
        <begin position="77"/>
        <end position="80"/>
    </location>
    <ligand>
        <name>substrate</name>
    </ligand>
</feature>
<feature type="binding site" evidence="1">
    <location>
        <position position="137"/>
    </location>
    <ligand>
        <name>a divalent metal cation</name>
        <dbReference type="ChEBI" id="CHEBI:60240"/>
    </ligand>
</feature>
<feature type="binding site" evidence="1">
    <location>
        <position position="137"/>
    </location>
    <ligand>
        <name>substrate</name>
    </ligand>
</feature>
<feature type="site" description="Appears to be important in orienting the phosphate for catalysis" evidence="1">
    <location>
        <position position="18"/>
    </location>
</feature>
<gene>
    <name type="ordered locus">PBPRA2627</name>
</gene>
<evidence type="ECO:0000255" key="1">
    <source>
        <dbReference type="HAMAP-Rule" id="MF_01100"/>
    </source>
</evidence>
<evidence type="ECO:0000255" key="2">
    <source>
        <dbReference type="PROSITE-ProRule" id="PRU01175"/>
    </source>
</evidence>
<comment type="function">
    <text evidence="1">Catalyzes the strictly specific dephosphorylation of 2'-deoxyribonucleoside 5'-monophosphates.</text>
</comment>
<comment type="catalytic activity">
    <reaction evidence="1">
        <text>a 2'-deoxyribonucleoside 5'-phosphate + H2O = a 2'-deoxyribonucleoside + phosphate</text>
        <dbReference type="Rhea" id="RHEA:36167"/>
        <dbReference type="ChEBI" id="CHEBI:15377"/>
        <dbReference type="ChEBI" id="CHEBI:18274"/>
        <dbReference type="ChEBI" id="CHEBI:43474"/>
        <dbReference type="ChEBI" id="CHEBI:65317"/>
        <dbReference type="EC" id="3.1.3.89"/>
    </reaction>
</comment>
<comment type="cofactor">
    <cofactor evidence="1">
        <name>a divalent metal cation</name>
        <dbReference type="ChEBI" id="CHEBI:60240"/>
    </cofactor>
</comment>
<comment type="subunit">
    <text evidence="1">Homodimer.</text>
</comment>
<comment type="subcellular location">
    <subcellularLocation>
        <location evidence="1">Cytoplasm</location>
    </subcellularLocation>
</comment>
<comment type="similarity">
    <text evidence="1">Belongs to the 5DNU family.</text>
</comment>